<reference key="1">
    <citation type="journal article" date="1993" name="Biochem. Biophys. Res. Commun.">
        <title>Molecular cloning and sequencing of the fimbrilin gene of Porphyromonas gingivalis strains and characterization of recombinant proteins.</title>
        <authorList>
            <person name="Fujiwara T."/>
            <person name="Morishima S."/>
            <person name="Takahashi I."/>
            <person name="Hamada S."/>
        </authorList>
    </citation>
    <scope>NUCLEOTIDE SEQUENCE [GENOMIC DNA]</scope>
    <source>
        <strain>ATCC 49417 / RB22 D-1</strain>
    </source>
</reference>
<reference key="2">
    <citation type="journal article" date="2013" name="Mol. Oral. Microbiol.">
        <title>Genetic and antigenic analyses of Porphyromonas gingivalis FimA fimbriae.</title>
        <authorList>
            <person name="Nagano K."/>
            <person name="Abiko Y."/>
            <person name="Yoshida Y."/>
            <person name="Yoshimura F."/>
        </authorList>
    </citation>
    <scope>FUNCTION</scope>
    <scope>SUBCELLULAR LOCATION</scope>
    <scope>CLASSIFICATION</scope>
</reference>
<comment type="function">
    <text evidence="1 4 5">Structural subunit of the major fimbriae (Probable). These long, filamentous pili are attached to the cell surface; they mediate biofilm formation, adhesion onto host cells and onto other bacteria that are part of the oral microbiome. They play an important role in the invasion of periodontal tissues. Fimbriae and their constituents are major virulence factors. FimA proteins from different strains have highly divergent sequences, and this has been used for classification. The sequence-based classification correlates with pathogenicity.</text>
</comment>
<comment type="subunit">
    <text evidence="1 2">Fimbriae are composed of a major, structural subunit (FimA) and the minor components FimC, FimD and FimE (By similarity). Head-to-tail oligomerization of FimA molecules mediates assembly of the fimbrium stalk, while the minor components probably form the fimbrium tip. Linear, head-to-tail oligomerization of FimA is mediated by a conformation change, facilitating the insertion of a C-terminal beta-strand into a groove in the N-terminal domain of the following subunit (By similarity).</text>
</comment>
<comment type="subcellular location">
    <subcellularLocation>
        <location evidence="4">Fimbrium</location>
    </subcellularLocation>
    <subcellularLocation>
        <location evidence="1">Cell outer membrane</location>
    </subcellularLocation>
    <text evidence="1">Synthesized as palmitoylated precursor. The lipidated propeptide is removed during processing to the mature protein.</text>
</comment>
<comment type="PTM">
    <text evidence="1">Synthesized as palmitoylated lipoprotein precursor. Efficient export to the outer membrane and integration into fimbriae requires lipidation and subsequent proteolytic removal of the lipidated propeptide.</text>
</comment>
<comment type="miscellaneous">
    <text evidence="5">The name (major fimbrium subunit) does not indicate the abundance of the protein, but is derived from the greater length of the major fimbriae. In strain ATCC 33277 and strain 381, major fimbriae are 300 - 1600 nM in length and about 5 nm in diameter. In contrast, minor fimbriae are only about 80 - 120 nm long. This length difference is observed only in a small number of strains, including strain ATCC 33277 and strain 381, and is due to a loss of function mutation in FimB, a protein that restricts fimbrial length in other strains.</text>
</comment>
<comment type="similarity">
    <text evidence="5">Belongs to the bacteroidetes fimbrillin superfamily. FimA/Mfa1 family.</text>
</comment>
<comment type="sequence caution" evidence="5">
    <conflict type="erroneous initiation">
        <sequence resource="EMBL-CDS" id="BAA04626"/>
    </conflict>
    <text>Truncated N-terminus.</text>
</comment>
<dbReference type="EMBL" id="D17800">
    <property type="protein sequence ID" value="BAA04626.1"/>
    <property type="status" value="ALT_INIT"/>
    <property type="molecule type" value="Genomic_DNA"/>
</dbReference>
<dbReference type="PIR" id="D60275">
    <property type="entry name" value="D60275"/>
</dbReference>
<dbReference type="PIR" id="JN0919">
    <property type="entry name" value="JN0919"/>
</dbReference>
<dbReference type="SMR" id="Q51825"/>
<dbReference type="GO" id="GO:0009279">
    <property type="term" value="C:cell outer membrane"/>
    <property type="evidence" value="ECO:0007669"/>
    <property type="project" value="UniProtKB-SubCell"/>
</dbReference>
<dbReference type="GO" id="GO:0009289">
    <property type="term" value="C:pilus"/>
    <property type="evidence" value="ECO:0000250"/>
    <property type="project" value="UniProtKB"/>
</dbReference>
<dbReference type="GO" id="GO:0005198">
    <property type="term" value="F:structural molecule activity"/>
    <property type="evidence" value="ECO:0007669"/>
    <property type="project" value="InterPro"/>
</dbReference>
<dbReference type="GO" id="GO:0007155">
    <property type="term" value="P:cell adhesion"/>
    <property type="evidence" value="ECO:0007669"/>
    <property type="project" value="UniProtKB-KW"/>
</dbReference>
<dbReference type="FunFam" id="2.60.40.2580:FF:000001">
    <property type="entry name" value="Major fimbrium subunit FimA type-2"/>
    <property type="match status" value="1"/>
</dbReference>
<dbReference type="FunFam" id="2.60.40.3690:FF:000001">
    <property type="entry name" value="Major fimbrium subunit FimA type-4"/>
    <property type="match status" value="1"/>
</dbReference>
<dbReference type="Gene3D" id="2.60.40.2580">
    <property type="match status" value="1"/>
</dbReference>
<dbReference type="Gene3D" id="2.60.40.3690">
    <property type="match status" value="1"/>
</dbReference>
<dbReference type="InterPro" id="IPR053878">
    <property type="entry name" value="FimA_C"/>
</dbReference>
<dbReference type="InterPro" id="IPR029141">
    <property type="entry name" value="FimA_N"/>
</dbReference>
<dbReference type="InterPro" id="IPR008110">
    <property type="entry name" value="Fimbrillin"/>
</dbReference>
<dbReference type="Pfam" id="PF22492">
    <property type="entry name" value="FimA4_C"/>
    <property type="match status" value="1"/>
</dbReference>
<dbReference type="Pfam" id="PF06321">
    <property type="entry name" value="P_gingi_FimA"/>
    <property type="match status" value="1"/>
</dbReference>
<dbReference type="PRINTS" id="PR01737">
    <property type="entry name" value="FIMBRILLIN"/>
</dbReference>
<dbReference type="PROSITE" id="PS51257">
    <property type="entry name" value="PROKAR_LIPOPROTEIN"/>
    <property type="match status" value="1"/>
</dbReference>
<name>FIMA7_PORGN</name>
<accession>Q51825</accession>
<protein>
    <recommendedName>
        <fullName>Major fimbrium subunit FimA type-2</fullName>
    </recommendedName>
    <alternativeName>
        <fullName>Fimbrillin</fullName>
        <shortName>Fimbrilin</shortName>
    </alternativeName>
    <alternativeName>
        <fullName>Major fimbrial subunit protein type II</fullName>
    </alternativeName>
</protein>
<organism>
    <name type="scientific">Porphyromonas gingivalis</name>
    <name type="common">Bacteroides gingivalis</name>
    <dbReference type="NCBI Taxonomy" id="837"/>
    <lineage>
        <taxon>Bacteria</taxon>
        <taxon>Pseudomonadati</taxon>
        <taxon>Bacteroidota</taxon>
        <taxon>Bacteroidia</taxon>
        <taxon>Bacteroidales</taxon>
        <taxon>Porphyromonadaceae</taxon>
        <taxon>Porphyromonas</taxon>
    </lineage>
</organism>
<proteinExistence type="inferred from homology"/>
<gene>
    <name type="primary">fimA</name>
</gene>
<sequence>MKKTKFFLLGLAALAMTACNKDNEAEPVTEGNATISVVLKTSNPNRAFGNAGDEAKVAKLTVMVYKGEQQEAIKSAENATKVENIKCSAGQRTLVVMANTGGMELAGKTLAEVKALTTELTEGNQEAAGLIMTAEPVEVTLVAGNNYYGYDGSQGGNQISQDTPLEIKRVRARIAFTKIEVTMSQSYANKYNFAPENIYALVAKKKSNLFGASLANNDDAYLTGSLTTFNGAYTPANYTHVDWLGRDFTEPSNNAPQGFYVLESTYAQNAGLRPTILCIKGKLTKHDGTPLSSEEMTAAFNAGWIVANNDPTTYYPVLVNFESNNYTYTGEAVEKGKIVRNHKFDINLTITGPGTNNPENPITESANLNVNCVVAAWKGVVQNVIW</sequence>
<keyword id="KW-0130">Cell adhesion</keyword>
<keyword id="KW-0998">Cell outer membrane</keyword>
<keyword id="KW-0281">Fimbrium</keyword>
<keyword id="KW-0449">Lipoprotein</keyword>
<keyword id="KW-0472">Membrane</keyword>
<keyword id="KW-0564">Palmitate</keyword>
<keyword id="KW-0732">Signal</keyword>
<keyword id="KW-0843">Virulence</keyword>
<feature type="signal peptide" evidence="3">
    <location>
        <begin position="1"/>
        <end position="18"/>
    </location>
</feature>
<feature type="propeptide" id="PRO_0000009162" evidence="1">
    <location>
        <begin position="19"/>
        <end position="46"/>
    </location>
</feature>
<feature type="chain" id="PRO_0000009163" description="Major fimbrium subunit FimA type-2">
    <location>
        <begin position="47"/>
        <end position="386"/>
    </location>
</feature>
<feature type="region of interest" description="Important for oligomerization and fimbrium assembly" evidence="2">
    <location>
        <begin position="377"/>
        <end position="386"/>
    </location>
</feature>
<feature type="site" description="Cleavage; by gingipain" evidence="1">
    <location>
        <begin position="46"/>
        <end position="47"/>
    </location>
</feature>
<feature type="lipid moiety-binding region" description="N-palmitoyl cysteine" evidence="3">
    <location>
        <position position="19"/>
    </location>
</feature>
<feature type="lipid moiety-binding region" description="S-diacylglycerol cysteine" evidence="3">
    <location>
        <position position="19"/>
    </location>
</feature>
<evidence type="ECO:0000250" key="1">
    <source>
        <dbReference type="UniProtKB" id="B2RH54"/>
    </source>
</evidence>
<evidence type="ECO:0000250" key="2">
    <source>
        <dbReference type="UniProtKB" id="P59914"/>
    </source>
</evidence>
<evidence type="ECO:0000255" key="3">
    <source>
        <dbReference type="PROSITE-ProRule" id="PRU00303"/>
    </source>
</evidence>
<evidence type="ECO:0000269" key="4">
    <source>
    </source>
</evidence>
<evidence type="ECO:0000305" key="5"/>